<comment type="function">
    <text evidence="1">This protein is located at the 30S-50S ribosomal subunit interface and may play a role in the structure and function of the aminoacyl-tRNA binding site.</text>
</comment>
<comment type="similarity">
    <text evidence="1">Belongs to the bacterial ribosomal protein bL19 family.</text>
</comment>
<feature type="chain" id="PRO_1000193871" description="Large ribosomal subunit protein bL19">
    <location>
        <begin position="1"/>
        <end position="124"/>
    </location>
</feature>
<accession>B9KNX6</accession>
<reference key="1">
    <citation type="journal article" date="2009" name="J. Bacteriol.">
        <title>Complete genome sequence of Rhodobacter sphaeroides KD131.</title>
        <authorList>
            <person name="Lim S.-K."/>
            <person name="Kim S.J."/>
            <person name="Cha S.H."/>
            <person name="Oh Y.-K."/>
            <person name="Rhee H.-J."/>
            <person name="Kim M.-S."/>
            <person name="Lee J.K."/>
        </authorList>
    </citation>
    <scope>NUCLEOTIDE SEQUENCE [LARGE SCALE GENOMIC DNA]</scope>
    <source>
        <strain>KD131 / KCTC 12085</strain>
    </source>
</reference>
<proteinExistence type="inferred from homology"/>
<dbReference type="EMBL" id="CP001150">
    <property type="protein sequence ID" value="ACM02298.1"/>
    <property type="molecule type" value="Genomic_DNA"/>
</dbReference>
<dbReference type="RefSeq" id="WP_002721387.1">
    <property type="nucleotide sequence ID" value="NC_011963.1"/>
</dbReference>
<dbReference type="SMR" id="B9KNX6"/>
<dbReference type="GeneID" id="67447817"/>
<dbReference type="KEGG" id="rsk:RSKD131_2438"/>
<dbReference type="HOGENOM" id="CLU_103507_0_2_5"/>
<dbReference type="GO" id="GO:0022625">
    <property type="term" value="C:cytosolic large ribosomal subunit"/>
    <property type="evidence" value="ECO:0007669"/>
    <property type="project" value="TreeGrafter"/>
</dbReference>
<dbReference type="GO" id="GO:0003735">
    <property type="term" value="F:structural constituent of ribosome"/>
    <property type="evidence" value="ECO:0007669"/>
    <property type="project" value="InterPro"/>
</dbReference>
<dbReference type="GO" id="GO:0006412">
    <property type="term" value="P:translation"/>
    <property type="evidence" value="ECO:0007669"/>
    <property type="project" value="UniProtKB-UniRule"/>
</dbReference>
<dbReference type="FunFam" id="2.30.30.790:FF:000001">
    <property type="entry name" value="50S ribosomal protein L19"/>
    <property type="match status" value="1"/>
</dbReference>
<dbReference type="Gene3D" id="2.30.30.790">
    <property type="match status" value="1"/>
</dbReference>
<dbReference type="HAMAP" id="MF_00402">
    <property type="entry name" value="Ribosomal_bL19"/>
    <property type="match status" value="1"/>
</dbReference>
<dbReference type="InterPro" id="IPR001857">
    <property type="entry name" value="Ribosomal_bL19"/>
</dbReference>
<dbReference type="InterPro" id="IPR018257">
    <property type="entry name" value="Ribosomal_bL19_CS"/>
</dbReference>
<dbReference type="InterPro" id="IPR038657">
    <property type="entry name" value="Ribosomal_bL19_sf"/>
</dbReference>
<dbReference type="InterPro" id="IPR008991">
    <property type="entry name" value="Translation_prot_SH3-like_sf"/>
</dbReference>
<dbReference type="NCBIfam" id="TIGR01024">
    <property type="entry name" value="rplS_bact"/>
    <property type="match status" value="1"/>
</dbReference>
<dbReference type="PANTHER" id="PTHR15680:SF9">
    <property type="entry name" value="LARGE RIBOSOMAL SUBUNIT PROTEIN BL19M"/>
    <property type="match status" value="1"/>
</dbReference>
<dbReference type="PANTHER" id="PTHR15680">
    <property type="entry name" value="RIBOSOMAL PROTEIN L19"/>
    <property type="match status" value="1"/>
</dbReference>
<dbReference type="Pfam" id="PF01245">
    <property type="entry name" value="Ribosomal_L19"/>
    <property type="match status" value="1"/>
</dbReference>
<dbReference type="PIRSF" id="PIRSF002191">
    <property type="entry name" value="Ribosomal_L19"/>
    <property type="match status" value="1"/>
</dbReference>
<dbReference type="PRINTS" id="PR00061">
    <property type="entry name" value="RIBOSOMALL19"/>
</dbReference>
<dbReference type="SUPFAM" id="SSF50104">
    <property type="entry name" value="Translation proteins SH3-like domain"/>
    <property type="match status" value="1"/>
</dbReference>
<dbReference type="PROSITE" id="PS01015">
    <property type="entry name" value="RIBOSOMAL_L19"/>
    <property type="match status" value="1"/>
</dbReference>
<organism>
    <name type="scientific">Cereibacter sphaeroides (strain KD131 / KCTC 12085)</name>
    <name type="common">Rhodobacter sphaeroides</name>
    <dbReference type="NCBI Taxonomy" id="557760"/>
    <lineage>
        <taxon>Bacteria</taxon>
        <taxon>Pseudomonadati</taxon>
        <taxon>Pseudomonadota</taxon>
        <taxon>Alphaproteobacteria</taxon>
        <taxon>Rhodobacterales</taxon>
        <taxon>Paracoccaceae</taxon>
        <taxon>Cereibacter</taxon>
    </lineage>
</organism>
<evidence type="ECO:0000255" key="1">
    <source>
        <dbReference type="HAMAP-Rule" id="MF_00402"/>
    </source>
</evidence>
<evidence type="ECO:0000305" key="2"/>
<keyword id="KW-0687">Ribonucleoprotein</keyword>
<keyword id="KW-0689">Ribosomal protein</keyword>
<sequence>MNLIAQLEAEQIAALGKTIPDFKAGDTVRVGYKVTEGTRSRVQNYEGVVIGRKGGNTISASFTVRKISFGEGVERVFPLYSTNIDSIEVVRRGRVRRAKLYYLRSRRGKSARIAEVTNYKEKSE</sequence>
<name>RL19_CERSK</name>
<protein>
    <recommendedName>
        <fullName evidence="1">Large ribosomal subunit protein bL19</fullName>
    </recommendedName>
    <alternativeName>
        <fullName evidence="2">50S ribosomal protein L19</fullName>
    </alternativeName>
</protein>
<gene>
    <name evidence="1" type="primary">rplS</name>
    <name type="ordered locus">RSKD131_2438</name>
</gene>